<evidence type="ECO:0000250" key="1"/>
<evidence type="ECO:0000255" key="2">
    <source>
        <dbReference type="PROSITE-ProRule" id="PRU00042"/>
    </source>
</evidence>
<evidence type="ECO:0000305" key="3"/>
<accession>P0CG24</accession>
<reference key="1">
    <citation type="journal article" date="2004" name="Nature">
        <title>DNA sequence and analysis of human chromosome 9.</title>
        <authorList>
            <person name="Humphray S.J."/>
            <person name="Oliver K."/>
            <person name="Hunt A.R."/>
            <person name="Plumb R.W."/>
            <person name="Loveland J.E."/>
            <person name="Howe K.L."/>
            <person name="Andrews T.D."/>
            <person name="Searle S."/>
            <person name="Hunt S.E."/>
            <person name="Scott C.E."/>
            <person name="Jones M.C."/>
            <person name="Ainscough R."/>
            <person name="Almeida J.P."/>
            <person name="Ambrose K.D."/>
            <person name="Ashwell R.I.S."/>
            <person name="Babbage A.K."/>
            <person name="Babbage S."/>
            <person name="Bagguley C.L."/>
            <person name="Bailey J."/>
            <person name="Banerjee R."/>
            <person name="Barker D.J."/>
            <person name="Barlow K.F."/>
            <person name="Bates K."/>
            <person name="Beasley H."/>
            <person name="Beasley O."/>
            <person name="Bird C.P."/>
            <person name="Bray-Allen S."/>
            <person name="Brown A.J."/>
            <person name="Brown J.Y."/>
            <person name="Burford D."/>
            <person name="Burrill W."/>
            <person name="Burton J."/>
            <person name="Carder C."/>
            <person name="Carter N.P."/>
            <person name="Chapman J.C."/>
            <person name="Chen Y."/>
            <person name="Clarke G."/>
            <person name="Clark S.Y."/>
            <person name="Clee C.M."/>
            <person name="Clegg S."/>
            <person name="Collier R.E."/>
            <person name="Corby N."/>
            <person name="Crosier M."/>
            <person name="Cummings A.T."/>
            <person name="Davies J."/>
            <person name="Dhami P."/>
            <person name="Dunn M."/>
            <person name="Dutta I."/>
            <person name="Dyer L.W."/>
            <person name="Earthrowl M.E."/>
            <person name="Faulkner L."/>
            <person name="Fleming C.J."/>
            <person name="Frankish A."/>
            <person name="Frankland J.A."/>
            <person name="French L."/>
            <person name="Fricker D.G."/>
            <person name="Garner P."/>
            <person name="Garnett J."/>
            <person name="Ghori J."/>
            <person name="Gilbert J.G.R."/>
            <person name="Glison C."/>
            <person name="Grafham D.V."/>
            <person name="Gribble S."/>
            <person name="Griffiths C."/>
            <person name="Griffiths-Jones S."/>
            <person name="Grocock R."/>
            <person name="Guy J."/>
            <person name="Hall R.E."/>
            <person name="Hammond S."/>
            <person name="Harley J.L."/>
            <person name="Harrison E.S.I."/>
            <person name="Hart E.A."/>
            <person name="Heath P.D."/>
            <person name="Henderson C.D."/>
            <person name="Hopkins B.L."/>
            <person name="Howard P.J."/>
            <person name="Howden P.J."/>
            <person name="Huckle E."/>
            <person name="Johnson C."/>
            <person name="Johnson D."/>
            <person name="Joy A.A."/>
            <person name="Kay M."/>
            <person name="Keenan S."/>
            <person name="Kershaw J.K."/>
            <person name="Kimberley A.M."/>
            <person name="King A."/>
            <person name="Knights A."/>
            <person name="Laird G.K."/>
            <person name="Langford C."/>
            <person name="Lawlor S."/>
            <person name="Leongamornlert D.A."/>
            <person name="Leversha M."/>
            <person name="Lloyd C."/>
            <person name="Lloyd D.M."/>
            <person name="Lovell J."/>
            <person name="Martin S."/>
            <person name="Mashreghi-Mohammadi M."/>
            <person name="Matthews L."/>
            <person name="McLaren S."/>
            <person name="McLay K.E."/>
            <person name="McMurray A."/>
            <person name="Milne S."/>
            <person name="Nickerson T."/>
            <person name="Nisbett J."/>
            <person name="Nordsiek G."/>
            <person name="Pearce A.V."/>
            <person name="Peck A.I."/>
            <person name="Porter K.M."/>
            <person name="Pandian R."/>
            <person name="Pelan S."/>
            <person name="Phillimore B."/>
            <person name="Povey S."/>
            <person name="Ramsey Y."/>
            <person name="Rand V."/>
            <person name="Scharfe M."/>
            <person name="Sehra H.K."/>
            <person name="Shownkeen R."/>
            <person name="Sims S.K."/>
            <person name="Skuce C.D."/>
            <person name="Smith M."/>
            <person name="Steward C.A."/>
            <person name="Swarbreck D."/>
            <person name="Sycamore N."/>
            <person name="Tester J."/>
            <person name="Thorpe A."/>
            <person name="Tracey A."/>
            <person name="Tromans A."/>
            <person name="Thomas D.W."/>
            <person name="Wall M."/>
            <person name="Wallis J.M."/>
            <person name="West A.P."/>
            <person name="Whitehead S.L."/>
            <person name="Willey D.L."/>
            <person name="Williams S.A."/>
            <person name="Wilming L."/>
            <person name="Wray P.W."/>
            <person name="Young L."/>
            <person name="Ashurst J.L."/>
            <person name="Coulson A."/>
            <person name="Blocker H."/>
            <person name="Durbin R.M."/>
            <person name="Sulston J.E."/>
            <person name="Hubbard T."/>
            <person name="Jackson M.J."/>
            <person name="Bentley D.R."/>
            <person name="Beck S."/>
            <person name="Rogers J."/>
            <person name="Dunham I."/>
        </authorList>
    </citation>
    <scope>NUCLEOTIDE SEQUENCE [LARGE SCALE GENOMIC DNA]</scope>
</reference>
<reference key="2">
    <citation type="journal article" date="2004" name="Nat. Genet.">
        <title>Complete sequencing and characterization of 21,243 full-length human cDNAs.</title>
        <authorList>
            <person name="Ota T."/>
            <person name="Suzuki Y."/>
            <person name="Nishikawa T."/>
            <person name="Otsuki T."/>
            <person name="Sugiyama T."/>
            <person name="Irie R."/>
            <person name="Wakamatsu A."/>
            <person name="Hayashi K."/>
            <person name="Sato H."/>
            <person name="Nagai K."/>
            <person name="Kimura K."/>
            <person name="Makita H."/>
            <person name="Sekine M."/>
            <person name="Obayashi M."/>
            <person name="Nishi T."/>
            <person name="Shibahara T."/>
            <person name="Tanaka T."/>
            <person name="Ishii S."/>
            <person name="Yamamoto J."/>
            <person name="Saito K."/>
            <person name="Kawai Y."/>
            <person name="Isono Y."/>
            <person name="Nakamura Y."/>
            <person name="Nagahari K."/>
            <person name="Murakami K."/>
            <person name="Yasuda T."/>
            <person name="Iwayanagi T."/>
            <person name="Wagatsuma M."/>
            <person name="Shiratori A."/>
            <person name="Sudo H."/>
            <person name="Hosoiri T."/>
            <person name="Kaku Y."/>
            <person name="Kodaira H."/>
            <person name="Kondo H."/>
            <person name="Sugawara M."/>
            <person name="Takahashi M."/>
            <person name="Kanda K."/>
            <person name="Yokoi T."/>
            <person name="Furuya T."/>
            <person name="Kikkawa E."/>
            <person name="Omura Y."/>
            <person name="Abe K."/>
            <person name="Kamihara K."/>
            <person name="Katsuta N."/>
            <person name="Sato K."/>
            <person name="Tanikawa M."/>
            <person name="Yamazaki M."/>
            <person name="Ninomiya K."/>
            <person name="Ishibashi T."/>
            <person name="Yamashita H."/>
            <person name="Murakawa K."/>
            <person name="Fujimori K."/>
            <person name="Tanai H."/>
            <person name="Kimata M."/>
            <person name="Watanabe M."/>
            <person name="Hiraoka S."/>
            <person name="Chiba Y."/>
            <person name="Ishida S."/>
            <person name="Ono Y."/>
            <person name="Takiguchi S."/>
            <person name="Watanabe S."/>
            <person name="Yosida M."/>
            <person name="Hotuta T."/>
            <person name="Kusano J."/>
            <person name="Kanehori K."/>
            <person name="Takahashi-Fujii A."/>
            <person name="Hara H."/>
            <person name="Tanase T.-O."/>
            <person name="Nomura Y."/>
            <person name="Togiya S."/>
            <person name="Komai F."/>
            <person name="Hara R."/>
            <person name="Takeuchi K."/>
            <person name="Arita M."/>
            <person name="Imose N."/>
            <person name="Musashino K."/>
            <person name="Yuuki H."/>
            <person name="Oshima A."/>
            <person name="Sasaki N."/>
            <person name="Aotsuka S."/>
            <person name="Yoshikawa Y."/>
            <person name="Matsunawa H."/>
            <person name="Ichihara T."/>
            <person name="Shiohata N."/>
            <person name="Sano S."/>
            <person name="Moriya S."/>
            <person name="Momiyama H."/>
            <person name="Satoh N."/>
            <person name="Takami S."/>
            <person name="Terashima Y."/>
            <person name="Suzuki O."/>
            <person name="Nakagawa S."/>
            <person name="Senoh A."/>
            <person name="Mizoguchi H."/>
            <person name="Goto Y."/>
            <person name="Shimizu F."/>
            <person name="Wakebe H."/>
            <person name="Hishigaki H."/>
            <person name="Watanabe T."/>
            <person name="Sugiyama A."/>
            <person name="Takemoto M."/>
            <person name="Kawakami B."/>
            <person name="Yamazaki M."/>
            <person name="Watanabe K."/>
            <person name="Kumagai A."/>
            <person name="Itakura S."/>
            <person name="Fukuzumi Y."/>
            <person name="Fujimori Y."/>
            <person name="Komiyama M."/>
            <person name="Tashiro H."/>
            <person name="Tanigami A."/>
            <person name="Fujiwara T."/>
            <person name="Ono T."/>
            <person name="Yamada K."/>
            <person name="Fujii Y."/>
            <person name="Ozaki K."/>
            <person name="Hirao M."/>
            <person name="Ohmori Y."/>
            <person name="Kawabata A."/>
            <person name="Hikiji T."/>
            <person name="Kobatake N."/>
            <person name="Inagaki H."/>
            <person name="Ikema Y."/>
            <person name="Okamoto S."/>
            <person name="Okitani R."/>
            <person name="Kawakami T."/>
            <person name="Noguchi S."/>
            <person name="Itoh T."/>
            <person name="Shigeta K."/>
            <person name="Senba T."/>
            <person name="Matsumura K."/>
            <person name="Nakajima Y."/>
            <person name="Mizuno T."/>
            <person name="Morinaga M."/>
            <person name="Sasaki M."/>
            <person name="Togashi T."/>
            <person name="Oyama M."/>
            <person name="Hata H."/>
            <person name="Watanabe M."/>
            <person name="Komatsu T."/>
            <person name="Mizushima-Sugano J."/>
            <person name="Satoh T."/>
            <person name="Shirai Y."/>
            <person name="Takahashi Y."/>
            <person name="Nakagawa K."/>
            <person name="Okumura K."/>
            <person name="Nagase T."/>
            <person name="Nomura N."/>
            <person name="Kikuchi H."/>
            <person name="Masuho Y."/>
            <person name="Yamashita R."/>
            <person name="Nakai K."/>
            <person name="Yada T."/>
            <person name="Nakamura Y."/>
            <person name="Ohara O."/>
            <person name="Isogai T."/>
            <person name="Sugano S."/>
        </authorList>
    </citation>
    <scope>NUCLEOTIDE SEQUENCE [LARGE SCALE MRNA] OF 1-348</scope>
    <source>
        <tissue>Chondrocyte</tissue>
    </source>
</reference>
<dbReference type="EMBL" id="AL162588">
    <property type="status" value="NOT_ANNOTATED_CDS"/>
    <property type="molecule type" value="Genomic_DNA"/>
</dbReference>
<dbReference type="EMBL" id="AK095843">
    <property type="status" value="NOT_ANNOTATED_CDS"/>
    <property type="molecule type" value="mRNA"/>
</dbReference>
<dbReference type="RefSeq" id="NP_001094808.1">
    <property type="nucleotide sequence ID" value="NM_001101338.2"/>
</dbReference>
<dbReference type="SMR" id="P0CG24"/>
<dbReference type="BioGRID" id="127989">
    <property type="interactions" value="1"/>
</dbReference>
<dbReference type="IntAct" id="P0CG24">
    <property type="interactions" value="1"/>
</dbReference>
<dbReference type="STRING" id="9606.ENSP00000490059"/>
<dbReference type="iPTMnet" id="P0CG24"/>
<dbReference type="PhosphoSitePlus" id="P0CG24"/>
<dbReference type="BioMuta" id="ZNF883"/>
<dbReference type="DMDM" id="298351897"/>
<dbReference type="jPOST" id="P0CG24"/>
<dbReference type="MassIVE" id="P0CG24"/>
<dbReference type="PeptideAtlas" id="P0CG24"/>
<dbReference type="Antibodypedia" id="78160">
    <property type="antibodies" value="23 antibodies from 6 providers"/>
</dbReference>
<dbReference type="DNASU" id="169834"/>
<dbReference type="Ensembl" id="ENST00000639662.2">
    <property type="protein sequence ID" value="ENSP00000516482.1"/>
    <property type="gene ID" value="ENSG00000228623.9"/>
</dbReference>
<dbReference type="GeneID" id="169834"/>
<dbReference type="KEGG" id="hsa:169834"/>
<dbReference type="MANE-Select" id="ENST00000639662.2">
    <property type="protein sequence ID" value="ENSP00000516482.1"/>
    <property type="RefSeq nucleotide sequence ID" value="NM_001101338.2"/>
    <property type="RefSeq protein sequence ID" value="NP_001094808.1"/>
</dbReference>
<dbReference type="AGR" id="HGNC:27271"/>
<dbReference type="CTD" id="169834"/>
<dbReference type="DisGeNET" id="169834"/>
<dbReference type="GeneCards" id="ZNF883"/>
<dbReference type="HGNC" id="HGNC:27271">
    <property type="gene designation" value="ZNF883"/>
</dbReference>
<dbReference type="HPA" id="ENSG00000228623">
    <property type="expression patterns" value="Tissue enhanced (retina)"/>
</dbReference>
<dbReference type="neXtProt" id="NX_P0CG24"/>
<dbReference type="OpenTargets" id="ENSG00000228623"/>
<dbReference type="PharmGKB" id="PA165586440"/>
<dbReference type="VEuPathDB" id="HostDB:ENSG00000285447"/>
<dbReference type="GeneTree" id="ENSGT00950000182890"/>
<dbReference type="InParanoid" id="P0CG24"/>
<dbReference type="OMA" id="KIYMTAN"/>
<dbReference type="PAN-GO" id="P0CG24">
    <property type="GO annotations" value="3 GO annotations based on evolutionary models"/>
</dbReference>
<dbReference type="PhylomeDB" id="P0CG24"/>
<dbReference type="PathwayCommons" id="P0CG24"/>
<dbReference type="BioGRID-ORCS" id="169834">
    <property type="hits" value="10 hits in 265 CRISPR screens"/>
</dbReference>
<dbReference type="ChiTaRS" id="ZNF883">
    <property type="organism name" value="human"/>
</dbReference>
<dbReference type="GenomeRNAi" id="169834"/>
<dbReference type="Pharos" id="P0CG24">
    <property type="development level" value="Tdark"/>
</dbReference>
<dbReference type="PRO" id="PR:P0CG24"/>
<dbReference type="Proteomes" id="UP000005640">
    <property type="component" value="Chromosome 9"/>
</dbReference>
<dbReference type="RNAct" id="P0CG24">
    <property type="molecule type" value="protein"/>
</dbReference>
<dbReference type="GO" id="GO:0005634">
    <property type="term" value="C:nucleus"/>
    <property type="evidence" value="ECO:0007669"/>
    <property type="project" value="UniProtKB-SubCell"/>
</dbReference>
<dbReference type="GO" id="GO:0000981">
    <property type="term" value="F:DNA-binding transcription factor activity, RNA polymerase II-specific"/>
    <property type="evidence" value="ECO:0000318"/>
    <property type="project" value="GO_Central"/>
</dbReference>
<dbReference type="GO" id="GO:0000978">
    <property type="term" value="F:RNA polymerase II cis-regulatory region sequence-specific DNA binding"/>
    <property type="evidence" value="ECO:0000318"/>
    <property type="project" value="GO_Central"/>
</dbReference>
<dbReference type="GO" id="GO:0008270">
    <property type="term" value="F:zinc ion binding"/>
    <property type="evidence" value="ECO:0007669"/>
    <property type="project" value="UniProtKB-KW"/>
</dbReference>
<dbReference type="GO" id="GO:0006357">
    <property type="term" value="P:regulation of transcription by RNA polymerase II"/>
    <property type="evidence" value="ECO:0000318"/>
    <property type="project" value="GO_Central"/>
</dbReference>
<dbReference type="FunFam" id="3.30.160.60:FF:004137">
    <property type="match status" value="1"/>
</dbReference>
<dbReference type="FunFam" id="3.30.160.60:FF:000002">
    <property type="entry name" value="Zinc finger protein 1 homolog"/>
    <property type="match status" value="1"/>
</dbReference>
<dbReference type="FunFam" id="3.30.160.60:FF:000295">
    <property type="entry name" value="zinc finger protein 19"/>
    <property type="match status" value="2"/>
</dbReference>
<dbReference type="FunFam" id="3.30.160.60:FF:000540">
    <property type="entry name" value="zinc finger protein 263 isoform X1"/>
    <property type="match status" value="1"/>
</dbReference>
<dbReference type="FunFam" id="3.30.160.60:FF:002259">
    <property type="entry name" value="zinc finger protein 271"/>
    <property type="match status" value="1"/>
</dbReference>
<dbReference type="FunFam" id="3.30.160.60:FF:002402">
    <property type="entry name" value="Zinc finger protein 347"/>
    <property type="match status" value="1"/>
</dbReference>
<dbReference type="FunFam" id="3.30.160.60:FF:000387">
    <property type="entry name" value="Zinc finger protein 354A"/>
    <property type="match status" value="1"/>
</dbReference>
<dbReference type="FunFam" id="3.30.160.60:FF:000016">
    <property type="entry name" value="zinc finger protein 37 homolog"/>
    <property type="match status" value="1"/>
</dbReference>
<dbReference type="FunFam" id="3.30.160.60:FF:000338">
    <property type="entry name" value="zinc finger protein 383"/>
    <property type="match status" value="1"/>
</dbReference>
<dbReference type="FunFam" id="3.30.160.60:FF:001498">
    <property type="entry name" value="Zinc finger protein 404"/>
    <property type="match status" value="3"/>
</dbReference>
<dbReference type="FunFam" id="3.30.160.60:FF:000281">
    <property type="entry name" value="Zinc finger protein 558 isoform X1"/>
    <property type="match status" value="1"/>
</dbReference>
<dbReference type="Gene3D" id="3.30.160.60">
    <property type="entry name" value="Classic Zinc Finger"/>
    <property type="match status" value="13"/>
</dbReference>
<dbReference type="InterPro" id="IPR050758">
    <property type="entry name" value="Znf_C2H2-type"/>
</dbReference>
<dbReference type="InterPro" id="IPR036236">
    <property type="entry name" value="Znf_C2H2_sf"/>
</dbReference>
<dbReference type="InterPro" id="IPR013087">
    <property type="entry name" value="Znf_C2H2_type"/>
</dbReference>
<dbReference type="PANTHER" id="PTHR23234:SF8">
    <property type="entry name" value="C2H2-TYPE DOMAIN-CONTAINING PROTEIN"/>
    <property type="match status" value="1"/>
</dbReference>
<dbReference type="PANTHER" id="PTHR23234">
    <property type="entry name" value="ZNF44 PROTEIN"/>
    <property type="match status" value="1"/>
</dbReference>
<dbReference type="Pfam" id="PF00096">
    <property type="entry name" value="zf-C2H2"/>
    <property type="match status" value="4"/>
</dbReference>
<dbReference type="Pfam" id="PF13912">
    <property type="entry name" value="zf-C2H2_6"/>
    <property type="match status" value="1"/>
</dbReference>
<dbReference type="Pfam" id="PF13465">
    <property type="entry name" value="zf-H2C2_2"/>
    <property type="match status" value="4"/>
</dbReference>
<dbReference type="PRINTS" id="PR00048">
    <property type="entry name" value="ZINCFINGER"/>
</dbReference>
<dbReference type="SMART" id="SM00355">
    <property type="entry name" value="ZnF_C2H2"/>
    <property type="match status" value="13"/>
</dbReference>
<dbReference type="SUPFAM" id="SSF57667">
    <property type="entry name" value="beta-beta-alpha zinc fingers"/>
    <property type="match status" value="7"/>
</dbReference>
<dbReference type="PROSITE" id="PS00028">
    <property type="entry name" value="ZINC_FINGER_C2H2_1"/>
    <property type="match status" value="13"/>
</dbReference>
<dbReference type="PROSITE" id="PS50157">
    <property type="entry name" value="ZINC_FINGER_C2H2_2"/>
    <property type="match status" value="13"/>
</dbReference>
<organism>
    <name type="scientific">Homo sapiens</name>
    <name type="common">Human</name>
    <dbReference type="NCBI Taxonomy" id="9606"/>
    <lineage>
        <taxon>Eukaryota</taxon>
        <taxon>Metazoa</taxon>
        <taxon>Chordata</taxon>
        <taxon>Craniata</taxon>
        <taxon>Vertebrata</taxon>
        <taxon>Euteleostomi</taxon>
        <taxon>Mammalia</taxon>
        <taxon>Eutheria</taxon>
        <taxon>Euarchontoglires</taxon>
        <taxon>Primates</taxon>
        <taxon>Haplorrhini</taxon>
        <taxon>Catarrhini</taxon>
        <taxon>Hominidae</taxon>
        <taxon>Homo</taxon>
    </lineage>
</organism>
<name>ZN883_HUMAN</name>
<protein>
    <recommendedName>
        <fullName>Zinc finger protein 883</fullName>
    </recommendedName>
</protein>
<proteinExistence type="evidence at protein level"/>
<feature type="chain" id="PRO_0000395113" description="Zinc finger protein 883">
    <location>
        <begin position="1"/>
        <end position="379"/>
    </location>
</feature>
<feature type="zinc finger region" description="C2H2-type 1" evidence="2">
    <location>
        <begin position="13"/>
        <end position="35"/>
    </location>
</feature>
<feature type="zinc finger region" description="C2H2-type 2" evidence="2">
    <location>
        <begin position="41"/>
        <end position="63"/>
    </location>
</feature>
<feature type="zinc finger region" description="C2H2-type 3" evidence="2">
    <location>
        <begin position="69"/>
        <end position="91"/>
    </location>
</feature>
<feature type="zinc finger region" description="C2H2-type 4" evidence="2">
    <location>
        <begin position="97"/>
        <end position="119"/>
    </location>
</feature>
<feature type="zinc finger region" description="C2H2-type 5" evidence="2">
    <location>
        <begin position="125"/>
        <end position="147"/>
    </location>
</feature>
<feature type="zinc finger region" description="C2H2-type 6" evidence="2">
    <location>
        <begin position="153"/>
        <end position="175"/>
    </location>
</feature>
<feature type="zinc finger region" description="C2H2-type 7" evidence="2">
    <location>
        <begin position="181"/>
        <end position="203"/>
    </location>
</feature>
<feature type="zinc finger region" description="C2H2-type 8" evidence="2">
    <location>
        <begin position="209"/>
        <end position="231"/>
    </location>
</feature>
<feature type="zinc finger region" description="C2H2-type 9" evidence="2">
    <location>
        <begin position="237"/>
        <end position="259"/>
    </location>
</feature>
<feature type="zinc finger region" description="C2H2-type 10" evidence="2">
    <location>
        <begin position="265"/>
        <end position="287"/>
    </location>
</feature>
<feature type="zinc finger region" description="C2H2-type 11" evidence="2">
    <location>
        <begin position="293"/>
        <end position="315"/>
    </location>
</feature>
<feature type="zinc finger region" description="C2H2-type 12" evidence="2">
    <location>
        <begin position="321"/>
        <end position="343"/>
    </location>
</feature>
<feature type="zinc finger region" description="C2H2-type 13" evidence="2">
    <location>
        <begin position="349"/>
        <end position="371"/>
    </location>
</feature>
<keyword id="KW-0238">DNA-binding</keyword>
<keyword id="KW-0479">Metal-binding</keyword>
<keyword id="KW-0539">Nucleus</keyword>
<keyword id="KW-1267">Proteomics identification</keyword>
<keyword id="KW-1185">Reference proteome</keyword>
<keyword id="KW-0677">Repeat</keyword>
<keyword id="KW-0804">Transcription</keyword>
<keyword id="KW-0805">Transcription regulation</keyword>
<keyword id="KW-0862">Zinc</keyword>
<keyword id="KW-0863">Zinc-finger</keyword>
<sequence>MESEKIYMTANPYLCTECGKGYTCLASLTQHQKTHIGEKPYECKICGKSFTRNSNLVQHQRIHTGEKPYECNECGKAFSQSTNLIQHQRVHTGEKPYECNECEKTFSHRSSLRNHERIHTGEKPYPCNECGKAFSHISALTQHHRIHTGKKPYECTECGKTFSRSTHLIEHQGIHSEEKSYQCKQCRKVFCHSTSLIRHQRTHTGEKPYECNECGKAFSHTPAFIQHQRIHTGEKPYECNACGKAFNRSAHLTEHQRTHTGEKPYVCKECGKTFSRSTHLTEHLKIHSCVKPYQCNECQKLFCYRTSLIRHQRTHTGEKPYQCNECGKSFSLSSALTKHKRIHTRERPYQCTKCGDVFCHSTSLIRHQKTHFRKETLAE</sequence>
<comment type="function">
    <text evidence="1">May be involved in transcriptional regulation.</text>
</comment>
<comment type="interaction">
    <interactant intactId="EBI-18515265">
        <id>P0CG24</id>
    </interactant>
    <interactant intactId="EBI-11977221">
        <id>Q86Z20</id>
        <label>CCDC125</label>
    </interactant>
    <organismsDiffer>false</organismsDiffer>
    <experiments>3</experiments>
</comment>
<comment type="subcellular location">
    <subcellularLocation>
        <location evidence="1">Nucleus</location>
    </subcellularLocation>
</comment>
<comment type="similarity">
    <text evidence="3">Belongs to the krueppel C2H2-type zinc-finger protein family.</text>
</comment>
<gene>
    <name type="primary">ZNF883</name>
</gene>